<gene>
    <name type="primary">cbrA</name>
    <name type="ordered locus">UTI89_C4241</name>
</gene>
<name>CBRA_ECOUT</name>
<feature type="chain" id="PRO_0000320280" description="Protein CbrA">
    <location>
        <begin position="1"/>
        <end position="366"/>
    </location>
</feature>
<organism>
    <name type="scientific">Escherichia coli (strain UTI89 / UPEC)</name>
    <dbReference type="NCBI Taxonomy" id="364106"/>
    <lineage>
        <taxon>Bacteria</taxon>
        <taxon>Pseudomonadati</taxon>
        <taxon>Pseudomonadota</taxon>
        <taxon>Gammaproteobacteria</taxon>
        <taxon>Enterobacterales</taxon>
        <taxon>Enterobacteriaceae</taxon>
        <taxon>Escherichia</taxon>
    </lineage>
</organism>
<sequence>MEHFDVAIIGLGPAGSALARKLAGKMQVIALDKKHQHGTEGFSKPCGGLLAPDAQRSFIRDGLTLPVDVIANPQIFSVKTVDVAASLTRNYQRSYININRHAFDLWMKSLIPASVEVYHDSLCRKIWREDDKWHVIFRADGWEQHITARYLVGADGANSMVRRHLYPDHQIRKYVAIQQWFAEKHPVPFYSCIFDNAITDCYSWSISKDGYFIFGGAYPMKDGQTRFTTLKEKMSAFQFQFGKAVKSEKCTVLFPSRWQDFVCGKDNAFLIGEAAGFISASSLEGISYALDSAEILRSVLLKLPEKLNTAYWRATRKLRLKLFGKIVKSRCLTAPALRKWIMRSGVAHIPQLKDYPTRFTSPTSRM</sequence>
<proteinExistence type="inferred from homology"/>
<reference key="1">
    <citation type="journal article" date="2006" name="Proc. Natl. Acad. Sci. U.S.A.">
        <title>Identification of genes subject to positive selection in uropathogenic strains of Escherichia coli: a comparative genomics approach.</title>
        <authorList>
            <person name="Chen S.L."/>
            <person name="Hung C.-S."/>
            <person name="Xu J."/>
            <person name="Reigstad C.S."/>
            <person name="Magrini V."/>
            <person name="Sabo A."/>
            <person name="Blasiar D."/>
            <person name="Bieri T."/>
            <person name="Meyer R.R."/>
            <person name="Ozersky P."/>
            <person name="Armstrong J.R."/>
            <person name="Fulton R.S."/>
            <person name="Latreille J.P."/>
            <person name="Spieth J."/>
            <person name="Hooton T.M."/>
            <person name="Mardis E.R."/>
            <person name="Hultgren S.J."/>
            <person name="Gordon J.I."/>
        </authorList>
    </citation>
    <scope>NUCLEOTIDE SEQUENCE [LARGE SCALE GENOMIC DNA]</scope>
    <source>
        <strain>UTI89 / UPEC</strain>
    </source>
</reference>
<protein>
    <recommendedName>
        <fullName>Protein CbrA</fullName>
    </recommendedName>
</protein>
<dbReference type="EMBL" id="CP000243">
    <property type="protein sequence ID" value="ABE09668.1"/>
    <property type="status" value="ALT_INIT"/>
    <property type="molecule type" value="Genomic_DNA"/>
</dbReference>
<dbReference type="RefSeq" id="WP_001350839.1">
    <property type="nucleotide sequence ID" value="NZ_CP064825.1"/>
</dbReference>
<dbReference type="SMR" id="Q1R4P6"/>
<dbReference type="KEGG" id="eci:UTI89_C4241"/>
<dbReference type="HOGENOM" id="CLU_024648_1_0_6"/>
<dbReference type="Proteomes" id="UP000001952">
    <property type="component" value="Chromosome"/>
</dbReference>
<dbReference type="GO" id="GO:0071949">
    <property type="term" value="F:FAD binding"/>
    <property type="evidence" value="ECO:0007669"/>
    <property type="project" value="InterPro"/>
</dbReference>
<dbReference type="FunFam" id="3.50.50.60:FF:000151">
    <property type="entry name" value="Protein CbrA"/>
    <property type="match status" value="1"/>
</dbReference>
<dbReference type="Gene3D" id="3.50.50.60">
    <property type="entry name" value="FAD/NAD(P)-binding domain"/>
    <property type="match status" value="1"/>
</dbReference>
<dbReference type="InterPro" id="IPR002938">
    <property type="entry name" value="FAD-bd"/>
</dbReference>
<dbReference type="InterPro" id="IPR036188">
    <property type="entry name" value="FAD/NAD-bd_sf"/>
</dbReference>
<dbReference type="InterPro" id="IPR050407">
    <property type="entry name" value="Geranylgeranyl_reductase"/>
</dbReference>
<dbReference type="NCBIfam" id="NF008519">
    <property type="entry name" value="PRK11445.1"/>
    <property type="match status" value="1"/>
</dbReference>
<dbReference type="PANTHER" id="PTHR42685:SF22">
    <property type="entry name" value="CONDITIONED MEDIUM FACTOR RECEPTOR 1"/>
    <property type="match status" value="1"/>
</dbReference>
<dbReference type="PANTHER" id="PTHR42685">
    <property type="entry name" value="GERANYLGERANYL DIPHOSPHATE REDUCTASE"/>
    <property type="match status" value="1"/>
</dbReference>
<dbReference type="Pfam" id="PF01494">
    <property type="entry name" value="FAD_binding_3"/>
    <property type="match status" value="1"/>
</dbReference>
<dbReference type="PRINTS" id="PR00420">
    <property type="entry name" value="RNGMNOXGNASE"/>
</dbReference>
<dbReference type="SUPFAM" id="SSF51905">
    <property type="entry name" value="FAD/NAD(P)-binding domain"/>
    <property type="match status" value="1"/>
</dbReference>
<accession>Q1R4P6</accession>
<comment type="similarity">
    <text evidence="1">Belongs to the CbrA family.</text>
</comment>
<comment type="sequence caution" evidence="1">
    <conflict type="erroneous initiation">
        <sequence resource="EMBL-CDS" id="ABE09668"/>
    </conflict>
</comment>
<evidence type="ECO:0000305" key="1"/>